<proteinExistence type="inferred from homology"/>
<sequence length="394" mass="42283">MAAYDWIESALATVHKANWYRSVKTMSSPGPTAVLNGQTVINFASNDYLGLAGDSRLAEAAIAAINTYGTGSTGSRLLSGHRMIHEQLERAIATWKQTETAIVYSSGYLANIGTITALVNKRDLILADAYNHASLKNGARLSGATIHEFGHANVTELQTLLETHRSHHRRCLLVTDSVFSMDGDLCPLPELIALAEQYDCMLLIDEAHGTGVLGKTGAGCVEHFGCRDAELIQMGTLSKALGSLGGYVAGSASLIDYLRNRSSSWIYTTGLSPADTAAALAAVEIIREGSELRSQLWQRVTQLKQALTTHLAPEDEHQTMQLLPSESPILCVQMPTPAAVLTASQQLLDQGIFAPAIRPPTVPTSRIRISIMATHQAVQIDQLIVALSEVAQGS</sequence>
<reference key="1">
    <citation type="journal article" date="2008" name="Proc. Natl. Acad. Sci. U.S.A.">
        <title>Niche adaptation and genome expansion in the chlorophyll d-producing cyanobacterium Acaryochloris marina.</title>
        <authorList>
            <person name="Swingley W.D."/>
            <person name="Chen M."/>
            <person name="Cheung P.C."/>
            <person name="Conrad A.L."/>
            <person name="Dejesa L.C."/>
            <person name="Hao J."/>
            <person name="Honchak B.M."/>
            <person name="Karbach L.E."/>
            <person name="Kurdoglu A."/>
            <person name="Lahiri S."/>
            <person name="Mastrian S.D."/>
            <person name="Miyashita H."/>
            <person name="Page L."/>
            <person name="Ramakrishna P."/>
            <person name="Satoh S."/>
            <person name="Sattley W.M."/>
            <person name="Shimada Y."/>
            <person name="Taylor H.L."/>
            <person name="Tomo T."/>
            <person name="Tsuchiya T."/>
            <person name="Wang Z.T."/>
            <person name="Raymond J."/>
            <person name="Mimuro M."/>
            <person name="Blankenship R.E."/>
            <person name="Touchman J.W."/>
        </authorList>
    </citation>
    <scope>NUCLEOTIDE SEQUENCE [LARGE SCALE GENOMIC DNA]</scope>
    <source>
        <strain>MBIC 11017</strain>
    </source>
</reference>
<comment type="function">
    <text evidence="1">Catalyzes the decarboxylative condensation of pimeloyl-[acyl-carrier protein] and L-alanine to produce 8-amino-7-oxononanoate (AON), [acyl-carrier protein], and carbon dioxide.</text>
</comment>
<comment type="catalytic activity">
    <reaction>
        <text>6-carboxyhexanoyl-[ACP] + L-alanine + H(+) = (8S)-8-amino-7-oxononanoate + holo-[ACP] + CO2</text>
        <dbReference type="Rhea" id="RHEA:42288"/>
        <dbReference type="Rhea" id="RHEA-COMP:9685"/>
        <dbReference type="Rhea" id="RHEA-COMP:9955"/>
        <dbReference type="ChEBI" id="CHEBI:15378"/>
        <dbReference type="ChEBI" id="CHEBI:16526"/>
        <dbReference type="ChEBI" id="CHEBI:57972"/>
        <dbReference type="ChEBI" id="CHEBI:64479"/>
        <dbReference type="ChEBI" id="CHEBI:78846"/>
        <dbReference type="ChEBI" id="CHEBI:149468"/>
        <dbReference type="EC" id="2.3.1.47"/>
    </reaction>
</comment>
<comment type="cofactor">
    <cofactor evidence="1">
        <name>pyridoxal 5'-phosphate</name>
        <dbReference type="ChEBI" id="CHEBI:597326"/>
    </cofactor>
</comment>
<comment type="pathway">
    <text>Cofactor biosynthesis; biotin biosynthesis.</text>
</comment>
<comment type="subunit">
    <text evidence="1">Homodimer.</text>
</comment>
<comment type="similarity">
    <text evidence="2">Belongs to the class-II pyridoxal-phosphate-dependent aminotransferase family. BioF subfamily.</text>
</comment>
<dbReference type="EC" id="2.3.1.47"/>
<dbReference type="EMBL" id="CP000828">
    <property type="protein sequence ID" value="ABW27306.1"/>
    <property type="molecule type" value="Genomic_DNA"/>
</dbReference>
<dbReference type="RefSeq" id="WP_012162780.1">
    <property type="nucleotide sequence ID" value="NC_009925.1"/>
</dbReference>
<dbReference type="SMR" id="B0C205"/>
<dbReference type="STRING" id="329726.AM1_2296"/>
<dbReference type="KEGG" id="amr:AM1_2296"/>
<dbReference type="eggNOG" id="COG0156">
    <property type="taxonomic scope" value="Bacteria"/>
</dbReference>
<dbReference type="HOGENOM" id="CLU_015846_11_0_3"/>
<dbReference type="OrthoDB" id="9807157at2"/>
<dbReference type="UniPathway" id="UPA00078"/>
<dbReference type="Proteomes" id="UP000000268">
    <property type="component" value="Chromosome"/>
</dbReference>
<dbReference type="GO" id="GO:0008710">
    <property type="term" value="F:8-amino-7-oxononanoate synthase activity"/>
    <property type="evidence" value="ECO:0007669"/>
    <property type="project" value="UniProtKB-EC"/>
</dbReference>
<dbReference type="GO" id="GO:0030170">
    <property type="term" value="F:pyridoxal phosphate binding"/>
    <property type="evidence" value="ECO:0007669"/>
    <property type="project" value="InterPro"/>
</dbReference>
<dbReference type="GO" id="GO:0009102">
    <property type="term" value="P:biotin biosynthetic process"/>
    <property type="evidence" value="ECO:0007669"/>
    <property type="project" value="UniProtKB-UniPathway"/>
</dbReference>
<dbReference type="CDD" id="cd06454">
    <property type="entry name" value="KBL_like"/>
    <property type="match status" value="1"/>
</dbReference>
<dbReference type="Gene3D" id="3.90.1150.10">
    <property type="entry name" value="Aspartate Aminotransferase, domain 1"/>
    <property type="match status" value="1"/>
</dbReference>
<dbReference type="Gene3D" id="3.40.640.10">
    <property type="entry name" value="Type I PLP-dependent aspartate aminotransferase-like (Major domain)"/>
    <property type="match status" value="1"/>
</dbReference>
<dbReference type="InterPro" id="IPR001917">
    <property type="entry name" value="Aminotrans_II_pyridoxalP_BS"/>
</dbReference>
<dbReference type="InterPro" id="IPR004839">
    <property type="entry name" value="Aminotransferase_I/II_large"/>
</dbReference>
<dbReference type="InterPro" id="IPR050087">
    <property type="entry name" value="AON_synthase_class-II"/>
</dbReference>
<dbReference type="InterPro" id="IPR004723">
    <property type="entry name" value="AONS_Archaea/Proteobacteria"/>
</dbReference>
<dbReference type="InterPro" id="IPR015424">
    <property type="entry name" value="PyrdxlP-dep_Trfase"/>
</dbReference>
<dbReference type="InterPro" id="IPR015421">
    <property type="entry name" value="PyrdxlP-dep_Trfase_major"/>
</dbReference>
<dbReference type="InterPro" id="IPR015422">
    <property type="entry name" value="PyrdxlP-dep_Trfase_small"/>
</dbReference>
<dbReference type="NCBIfam" id="TIGR00858">
    <property type="entry name" value="bioF"/>
    <property type="match status" value="1"/>
</dbReference>
<dbReference type="PANTHER" id="PTHR13693:SF100">
    <property type="entry name" value="8-AMINO-7-OXONONANOATE SYNTHASE"/>
    <property type="match status" value="1"/>
</dbReference>
<dbReference type="PANTHER" id="PTHR13693">
    <property type="entry name" value="CLASS II AMINOTRANSFERASE/8-AMINO-7-OXONONANOATE SYNTHASE"/>
    <property type="match status" value="1"/>
</dbReference>
<dbReference type="Pfam" id="PF00155">
    <property type="entry name" value="Aminotran_1_2"/>
    <property type="match status" value="1"/>
</dbReference>
<dbReference type="SUPFAM" id="SSF53383">
    <property type="entry name" value="PLP-dependent transferases"/>
    <property type="match status" value="1"/>
</dbReference>
<dbReference type="PROSITE" id="PS00599">
    <property type="entry name" value="AA_TRANSFER_CLASS_2"/>
    <property type="match status" value="1"/>
</dbReference>
<keyword id="KW-0093">Biotin biosynthesis</keyword>
<keyword id="KW-0663">Pyridoxal phosphate</keyword>
<keyword id="KW-1185">Reference proteome</keyword>
<keyword id="KW-0808">Transferase</keyword>
<gene>
    <name type="primary">bioF</name>
    <name type="ordered locus">AM1_2296</name>
</gene>
<accession>B0C205</accession>
<name>BIOF_ACAM1</name>
<protein>
    <recommendedName>
        <fullName>Putative 8-amino-7-oxononanoate synthase</fullName>
        <shortName>AONS</shortName>
        <ecNumber>2.3.1.47</ecNumber>
    </recommendedName>
    <alternativeName>
        <fullName>7-keto-8-amino-pelargonic acid synthase</fullName>
        <shortName>7-KAP synthase</shortName>
    </alternativeName>
    <alternativeName>
        <fullName>8-amino-7-ketopelargonate synthase</fullName>
    </alternativeName>
</protein>
<feature type="chain" id="PRO_0000380882" description="Putative 8-amino-7-oxononanoate synthase">
    <location>
        <begin position="1"/>
        <end position="394"/>
    </location>
</feature>
<feature type="binding site" evidence="1">
    <location>
        <position position="21"/>
    </location>
    <ligand>
        <name>substrate</name>
    </ligand>
</feature>
<feature type="binding site" evidence="1">
    <location>
        <begin position="107"/>
        <end position="108"/>
    </location>
    <ligand>
        <name>pyridoxal 5'-phosphate</name>
        <dbReference type="ChEBI" id="CHEBI:597326"/>
    </ligand>
</feature>
<feature type="binding site" evidence="1">
    <location>
        <position position="132"/>
    </location>
    <ligand>
        <name>substrate</name>
    </ligand>
</feature>
<feature type="binding site" evidence="1">
    <location>
        <position position="180"/>
    </location>
    <ligand>
        <name>pyridoxal 5'-phosphate</name>
        <dbReference type="ChEBI" id="CHEBI:597326"/>
    </ligand>
</feature>
<feature type="binding site" evidence="1">
    <location>
        <begin position="205"/>
        <end position="208"/>
    </location>
    <ligand>
        <name>pyridoxal 5'-phosphate</name>
        <dbReference type="ChEBI" id="CHEBI:597326"/>
    </ligand>
</feature>
<feature type="binding site" evidence="1">
    <location>
        <begin position="236"/>
        <end position="239"/>
    </location>
    <ligand>
        <name>pyridoxal 5'-phosphate</name>
        <dbReference type="ChEBI" id="CHEBI:597326"/>
    </ligand>
</feature>
<feature type="binding site" evidence="1">
    <location>
        <position position="361"/>
    </location>
    <ligand>
        <name>substrate</name>
    </ligand>
</feature>
<feature type="modified residue" description="N6-(pyridoxal phosphate)lysine" evidence="1">
    <location>
        <position position="239"/>
    </location>
</feature>
<organism>
    <name type="scientific">Acaryochloris marina (strain MBIC 11017)</name>
    <dbReference type="NCBI Taxonomy" id="329726"/>
    <lineage>
        <taxon>Bacteria</taxon>
        <taxon>Bacillati</taxon>
        <taxon>Cyanobacteriota</taxon>
        <taxon>Cyanophyceae</taxon>
        <taxon>Acaryochloridales</taxon>
        <taxon>Acaryochloridaceae</taxon>
        <taxon>Acaryochloris</taxon>
    </lineage>
</organism>
<evidence type="ECO:0000250" key="1"/>
<evidence type="ECO:0000305" key="2"/>